<organism>
    <name type="scientific">Bacillus cereus (strain AH820)</name>
    <dbReference type="NCBI Taxonomy" id="405535"/>
    <lineage>
        <taxon>Bacteria</taxon>
        <taxon>Bacillati</taxon>
        <taxon>Bacillota</taxon>
        <taxon>Bacilli</taxon>
        <taxon>Bacillales</taxon>
        <taxon>Bacillaceae</taxon>
        <taxon>Bacillus</taxon>
        <taxon>Bacillus cereus group</taxon>
    </lineage>
</organism>
<sequence>MRILGLDVGTKTVGVAISDEMGWTAQGLETIKINEERGQFGFDRISELVKQYDVDKIVVGLPKNMNGTIGPRGEACQQFAENLRELLQLDVVMWDERLSTMAAERLLISADVSRKKRKQVIDKMAAVVILQGFLDSK</sequence>
<reference key="1">
    <citation type="submission" date="2008-10" db="EMBL/GenBank/DDBJ databases">
        <title>Genome sequence of Bacillus cereus AH820.</title>
        <authorList>
            <person name="Dodson R.J."/>
            <person name="Durkin A.S."/>
            <person name="Rosovitz M.J."/>
            <person name="Rasko D.A."/>
            <person name="Hoffmaster A."/>
            <person name="Ravel J."/>
            <person name="Sutton G."/>
        </authorList>
    </citation>
    <scope>NUCLEOTIDE SEQUENCE [LARGE SCALE GENOMIC DNA]</scope>
    <source>
        <strain>AH820</strain>
    </source>
</reference>
<proteinExistence type="inferred from homology"/>
<feature type="chain" id="PRO_1000130995" description="Putative pre-16S rRNA nuclease">
    <location>
        <begin position="1"/>
        <end position="137"/>
    </location>
</feature>
<evidence type="ECO:0000255" key="1">
    <source>
        <dbReference type="HAMAP-Rule" id="MF_00651"/>
    </source>
</evidence>
<dbReference type="EC" id="3.1.-.-" evidence="1"/>
<dbReference type="EMBL" id="CP001283">
    <property type="protein sequence ID" value="ACK88265.1"/>
    <property type="molecule type" value="Genomic_DNA"/>
</dbReference>
<dbReference type="SMR" id="B7JPX2"/>
<dbReference type="KEGG" id="bcu:BCAH820_4466"/>
<dbReference type="HOGENOM" id="CLU_098240_2_0_9"/>
<dbReference type="Proteomes" id="UP000001363">
    <property type="component" value="Chromosome"/>
</dbReference>
<dbReference type="GO" id="GO:0005829">
    <property type="term" value="C:cytosol"/>
    <property type="evidence" value="ECO:0007669"/>
    <property type="project" value="TreeGrafter"/>
</dbReference>
<dbReference type="GO" id="GO:0004518">
    <property type="term" value="F:nuclease activity"/>
    <property type="evidence" value="ECO:0007669"/>
    <property type="project" value="UniProtKB-KW"/>
</dbReference>
<dbReference type="GO" id="GO:0000967">
    <property type="term" value="P:rRNA 5'-end processing"/>
    <property type="evidence" value="ECO:0007669"/>
    <property type="project" value="UniProtKB-UniRule"/>
</dbReference>
<dbReference type="CDD" id="cd16964">
    <property type="entry name" value="YqgF"/>
    <property type="match status" value="1"/>
</dbReference>
<dbReference type="FunFam" id="3.30.420.140:FF:000003">
    <property type="entry name" value="Putative pre-16S rRNA nuclease"/>
    <property type="match status" value="1"/>
</dbReference>
<dbReference type="Gene3D" id="3.30.420.140">
    <property type="entry name" value="YqgF/RNase H-like domain"/>
    <property type="match status" value="1"/>
</dbReference>
<dbReference type="HAMAP" id="MF_00651">
    <property type="entry name" value="Nuclease_YqgF"/>
    <property type="match status" value="1"/>
</dbReference>
<dbReference type="InterPro" id="IPR012337">
    <property type="entry name" value="RNaseH-like_sf"/>
</dbReference>
<dbReference type="InterPro" id="IPR005227">
    <property type="entry name" value="YqgF"/>
</dbReference>
<dbReference type="InterPro" id="IPR006641">
    <property type="entry name" value="YqgF/RNaseH-like_dom"/>
</dbReference>
<dbReference type="InterPro" id="IPR037027">
    <property type="entry name" value="YqgF/RNaseH-like_dom_sf"/>
</dbReference>
<dbReference type="NCBIfam" id="TIGR00250">
    <property type="entry name" value="RNAse_H_YqgF"/>
    <property type="match status" value="1"/>
</dbReference>
<dbReference type="PANTHER" id="PTHR33317">
    <property type="entry name" value="POLYNUCLEOTIDYL TRANSFERASE, RIBONUCLEASE H-LIKE SUPERFAMILY PROTEIN"/>
    <property type="match status" value="1"/>
</dbReference>
<dbReference type="PANTHER" id="PTHR33317:SF4">
    <property type="entry name" value="POLYNUCLEOTIDYL TRANSFERASE, RIBONUCLEASE H-LIKE SUPERFAMILY PROTEIN"/>
    <property type="match status" value="1"/>
</dbReference>
<dbReference type="Pfam" id="PF03652">
    <property type="entry name" value="RuvX"/>
    <property type="match status" value="1"/>
</dbReference>
<dbReference type="SMART" id="SM00732">
    <property type="entry name" value="YqgFc"/>
    <property type="match status" value="1"/>
</dbReference>
<dbReference type="SUPFAM" id="SSF53098">
    <property type="entry name" value="Ribonuclease H-like"/>
    <property type="match status" value="1"/>
</dbReference>
<name>YQGF_BACC0</name>
<protein>
    <recommendedName>
        <fullName evidence="1">Putative pre-16S rRNA nuclease</fullName>
        <ecNumber evidence="1">3.1.-.-</ecNumber>
    </recommendedName>
</protein>
<comment type="function">
    <text evidence="1">Could be a nuclease involved in processing of the 5'-end of pre-16S rRNA.</text>
</comment>
<comment type="subcellular location">
    <subcellularLocation>
        <location evidence="1">Cytoplasm</location>
    </subcellularLocation>
</comment>
<comment type="similarity">
    <text evidence="1">Belongs to the YqgF nuclease family.</text>
</comment>
<keyword id="KW-0963">Cytoplasm</keyword>
<keyword id="KW-0378">Hydrolase</keyword>
<keyword id="KW-0540">Nuclease</keyword>
<keyword id="KW-0690">Ribosome biogenesis</keyword>
<accession>B7JPX2</accession>
<gene>
    <name type="ordered locus">BCAH820_4466</name>
</gene>